<name>TRNH1_ARATH</name>
<reference key="1">
    <citation type="journal article" date="2000" name="Nature">
        <title>Sequence and analysis of chromosome 1 of the plant Arabidopsis thaliana.</title>
        <authorList>
            <person name="Theologis A."/>
            <person name="Ecker J.R."/>
            <person name="Palm C.J."/>
            <person name="Federspiel N.A."/>
            <person name="Kaul S."/>
            <person name="White O."/>
            <person name="Alonso J."/>
            <person name="Altafi H."/>
            <person name="Araujo R."/>
            <person name="Bowman C.L."/>
            <person name="Brooks S.Y."/>
            <person name="Buehler E."/>
            <person name="Chan A."/>
            <person name="Chao Q."/>
            <person name="Chen H."/>
            <person name="Cheuk R.F."/>
            <person name="Chin C.W."/>
            <person name="Chung M.K."/>
            <person name="Conn L."/>
            <person name="Conway A.B."/>
            <person name="Conway A.R."/>
            <person name="Creasy T.H."/>
            <person name="Dewar K."/>
            <person name="Dunn P."/>
            <person name="Etgu P."/>
            <person name="Feldblyum T.V."/>
            <person name="Feng J.-D."/>
            <person name="Fong B."/>
            <person name="Fujii C.Y."/>
            <person name="Gill J.E."/>
            <person name="Goldsmith A.D."/>
            <person name="Haas B."/>
            <person name="Hansen N.F."/>
            <person name="Hughes B."/>
            <person name="Huizar L."/>
            <person name="Hunter J.L."/>
            <person name="Jenkins J."/>
            <person name="Johnson-Hopson C."/>
            <person name="Khan S."/>
            <person name="Khaykin E."/>
            <person name="Kim C.J."/>
            <person name="Koo H.L."/>
            <person name="Kremenetskaia I."/>
            <person name="Kurtz D.B."/>
            <person name="Kwan A."/>
            <person name="Lam B."/>
            <person name="Langin-Hooper S."/>
            <person name="Lee A."/>
            <person name="Lee J.M."/>
            <person name="Lenz C.A."/>
            <person name="Li J.H."/>
            <person name="Li Y.-P."/>
            <person name="Lin X."/>
            <person name="Liu S.X."/>
            <person name="Liu Z.A."/>
            <person name="Luros J.S."/>
            <person name="Maiti R."/>
            <person name="Marziali A."/>
            <person name="Militscher J."/>
            <person name="Miranda M."/>
            <person name="Nguyen M."/>
            <person name="Nierman W.C."/>
            <person name="Osborne B.I."/>
            <person name="Pai G."/>
            <person name="Peterson J."/>
            <person name="Pham P.K."/>
            <person name="Rizzo M."/>
            <person name="Rooney T."/>
            <person name="Rowley D."/>
            <person name="Sakano H."/>
            <person name="Salzberg S.L."/>
            <person name="Schwartz J.R."/>
            <person name="Shinn P."/>
            <person name="Southwick A.M."/>
            <person name="Sun H."/>
            <person name="Tallon L.J."/>
            <person name="Tambunga G."/>
            <person name="Toriumi M.J."/>
            <person name="Town C.D."/>
            <person name="Utterback T."/>
            <person name="Van Aken S."/>
            <person name="Vaysberg M."/>
            <person name="Vysotskaia V.S."/>
            <person name="Walker M."/>
            <person name="Wu D."/>
            <person name="Yu G."/>
            <person name="Fraser C.M."/>
            <person name="Venter J.C."/>
            <person name="Davis R.W."/>
        </authorList>
    </citation>
    <scope>NUCLEOTIDE SEQUENCE [LARGE SCALE GENOMIC DNA]</scope>
    <source>
        <strain>cv. Columbia</strain>
    </source>
</reference>
<reference key="2">
    <citation type="journal article" date="2017" name="Plant J.">
        <title>Araport11: a complete reannotation of the Arabidopsis thaliana reference genome.</title>
        <authorList>
            <person name="Cheng C.Y."/>
            <person name="Krishnakumar V."/>
            <person name="Chan A.P."/>
            <person name="Thibaud-Nissen F."/>
            <person name="Schobel S."/>
            <person name="Town C.D."/>
        </authorList>
    </citation>
    <scope>GENOME REANNOTATION</scope>
    <source>
        <strain>cv. Columbia</strain>
    </source>
</reference>
<reference key="3">
    <citation type="journal article" date="2003" name="Science">
        <title>Empirical analysis of transcriptional activity in the Arabidopsis genome.</title>
        <authorList>
            <person name="Yamada K."/>
            <person name="Lim J."/>
            <person name="Dale J.M."/>
            <person name="Chen H."/>
            <person name="Shinn P."/>
            <person name="Palm C.J."/>
            <person name="Southwick A.M."/>
            <person name="Wu H.C."/>
            <person name="Kim C.J."/>
            <person name="Nguyen M."/>
            <person name="Pham P.K."/>
            <person name="Cheuk R.F."/>
            <person name="Karlin-Newmann G."/>
            <person name="Liu S.X."/>
            <person name="Lam B."/>
            <person name="Sakano H."/>
            <person name="Wu T."/>
            <person name="Yu G."/>
            <person name="Miranda M."/>
            <person name="Quach H.L."/>
            <person name="Tripp M."/>
            <person name="Chang C.H."/>
            <person name="Lee J.M."/>
            <person name="Toriumi M.J."/>
            <person name="Chan M.M."/>
            <person name="Tang C.C."/>
            <person name="Onodera C.S."/>
            <person name="Deng J.M."/>
            <person name="Akiyama K."/>
            <person name="Ansari Y."/>
            <person name="Arakawa T."/>
            <person name="Banh J."/>
            <person name="Banno F."/>
            <person name="Bowser L."/>
            <person name="Brooks S.Y."/>
            <person name="Carninci P."/>
            <person name="Chao Q."/>
            <person name="Choy N."/>
            <person name="Enju A."/>
            <person name="Goldsmith A.D."/>
            <person name="Gurjal M."/>
            <person name="Hansen N.F."/>
            <person name="Hayashizaki Y."/>
            <person name="Johnson-Hopson C."/>
            <person name="Hsuan V.W."/>
            <person name="Iida K."/>
            <person name="Karnes M."/>
            <person name="Khan S."/>
            <person name="Koesema E."/>
            <person name="Ishida J."/>
            <person name="Jiang P.X."/>
            <person name="Jones T."/>
            <person name="Kawai J."/>
            <person name="Kamiya A."/>
            <person name="Meyers C."/>
            <person name="Nakajima M."/>
            <person name="Narusaka M."/>
            <person name="Seki M."/>
            <person name="Sakurai T."/>
            <person name="Satou M."/>
            <person name="Tamse R."/>
            <person name="Vaysberg M."/>
            <person name="Wallender E.K."/>
            <person name="Wong C."/>
            <person name="Yamamura Y."/>
            <person name="Yuan S."/>
            <person name="Shinozaki K."/>
            <person name="Davis R.W."/>
            <person name="Theologis A."/>
            <person name="Ecker J.R."/>
        </authorList>
    </citation>
    <scope>NUCLEOTIDE SEQUENCE [LARGE SCALE MRNA]</scope>
    <source>
        <strain>cv. Columbia</strain>
    </source>
</reference>
<reference key="4">
    <citation type="journal article" date="2009" name="Chem. Biol. Interact.">
        <title>The SDR (short-chain dehydrogenase/reductase and related enzymes) nomenclature initiative.</title>
        <authorList>
            <person name="Persson B."/>
            <person name="Kallberg Y."/>
            <person name="Bray J.E."/>
            <person name="Bruford E."/>
            <person name="Dellaporta S.L."/>
            <person name="Favia A.D."/>
            <person name="Duarte R.G."/>
            <person name="Joernvall H."/>
            <person name="Kavanagh K.L."/>
            <person name="Kedishvili N."/>
            <person name="Kisiela M."/>
            <person name="Maser E."/>
            <person name="Mindnich R."/>
            <person name="Orchard S."/>
            <person name="Penning T.M."/>
            <person name="Thornton J.M."/>
            <person name="Adamski J."/>
            <person name="Oppermann U."/>
        </authorList>
    </citation>
    <scope>GENE FAMILY</scope>
    <scope>NOMENCLATURE</scope>
</reference>
<reference key="5">
    <citation type="submission" date="2005-02" db="PDB data bank">
        <title>X-ray structure of putative tropinone reductase from Arabidopsis thaliana At1g07440.</title>
        <authorList>
            <consortium name="Center for eukaryotic structural genomics (CESG)"/>
        </authorList>
    </citation>
    <scope>X-RAY CRYSTALLOGRAPHY (2.1 ANGSTROMS)</scope>
</reference>
<proteinExistence type="evidence at protein level"/>
<keyword id="KW-0002">3D-structure</keyword>
<keyword id="KW-0025">Alternative splicing</keyword>
<keyword id="KW-0521">NADP</keyword>
<keyword id="KW-0560">Oxidoreductase</keyword>
<keyword id="KW-1185">Reference proteome</keyword>
<accession>P0DKI3</accession>
<accession>Q9ASX2</accession>
<accession>Q9LNW5</accession>
<comment type="alternative products">
    <event type="alternative splicing"/>
    <isoform>
        <id>P0DKI3-1</id>
        <name>1</name>
        <sequence type="displayed"/>
    </isoform>
    <text>A number of isoforms are produced. According to EST sequences.</text>
</comment>
<comment type="similarity">
    <text evidence="3">Belongs to the short-chain dehydrogenases/reductases (SDR) family. SDR65C subfamily.</text>
</comment>
<comment type="sequence caution" evidence="3">
    <conflict type="erroneous gene model prediction">
        <sequence resource="EMBL-CDS" id="AAF79553"/>
    </conflict>
    <text>The predicted gene has been split into 2 genes: At1g07440 and At1g07450.</text>
</comment>
<organism>
    <name type="scientific">Arabidopsis thaliana</name>
    <name type="common">Mouse-ear cress</name>
    <dbReference type="NCBI Taxonomy" id="3702"/>
    <lineage>
        <taxon>Eukaryota</taxon>
        <taxon>Viridiplantae</taxon>
        <taxon>Streptophyta</taxon>
        <taxon>Embryophyta</taxon>
        <taxon>Tracheophyta</taxon>
        <taxon>Spermatophyta</taxon>
        <taxon>Magnoliopsida</taxon>
        <taxon>eudicotyledons</taxon>
        <taxon>Gunneridae</taxon>
        <taxon>Pentapetalae</taxon>
        <taxon>rosids</taxon>
        <taxon>malvids</taxon>
        <taxon>Brassicales</taxon>
        <taxon>Brassicaceae</taxon>
        <taxon>Camelineae</taxon>
        <taxon>Arabidopsis</taxon>
    </lineage>
</organism>
<gene>
    <name evidence="4" type="ordered locus">At1g07440</name>
    <name type="ORF">F22G5.16</name>
    <name evidence="5" type="ORF">F22G5.20</name>
    <name type="ORF">F22G5.39</name>
</gene>
<evidence type="ECO:0000250" key="1">
    <source>
        <dbReference type="UniProtKB" id="P50162"/>
    </source>
</evidence>
<evidence type="ECO:0000255" key="2">
    <source>
        <dbReference type="PROSITE-ProRule" id="PRU10001"/>
    </source>
</evidence>
<evidence type="ECO:0000305" key="3"/>
<evidence type="ECO:0000312" key="4">
    <source>
        <dbReference type="Araport" id="AT1G07440"/>
    </source>
</evidence>
<evidence type="ECO:0000312" key="5">
    <source>
        <dbReference type="EMBL" id="AAF79553.1"/>
    </source>
</evidence>
<evidence type="ECO:0007829" key="6">
    <source>
        <dbReference type="PDB" id="1XQ1"/>
    </source>
</evidence>
<evidence type="ECO:0007829" key="7">
    <source>
        <dbReference type="PDB" id="2Q45"/>
    </source>
</evidence>
<dbReference type="EC" id="1.1.1.-" evidence="3"/>
<dbReference type="EMBL" id="AC022464">
    <property type="protein sequence ID" value="AAF79553.1"/>
    <property type="status" value="ALT_SEQ"/>
    <property type="molecule type" value="Genomic_DNA"/>
</dbReference>
<dbReference type="EMBL" id="CP002684">
    <property type="protein sequence ID" value="AEE28125.1"/>
    <property type="molecule type" value="Genomic_DNA"/>
</dbReference>
<dbReference type="EMBL" id="AF361621">
    <property type="protein sequence ID" value="AAK32789.1"/>
    <property type="molecule type" value="mRNA"/>
</dbReference>
<dbReference type="EMBL" id="AY055094">
    <property type="protein sequence ID" value="AAL05894.1"/>
    <property type="molecule type" value="mRNA"/>
</dbReference>
<dbReference type="PIR" id="C86209">
    <property type="entry name" value="C86209"/>
</dbReference>
<dbReference type="RefSeq" id="NP_172224.1">
    <molecule id="P0DKI3-1"/>
    <property type="nucleotide sequence ID" value="NM_100618.5"/>
</dbReference>
<dbReference type="PDB" id="1XQ1">
    <property type="method" value="X-ray"/>
    <property type="resolution" value="2.10 A"/>
    <property type="chains" value="A=1-266"/>
</dbReference>
<dbReference type="PDB" id="2Q45">
    <property type="method" value="X-ray"/>
    <property type="resolution" value="2.10 A"/>
    <property type="chains" value="A=1-266"/>
</dbReference>
<dbReference type="PDBsum" id="1XQ1"/>
<dbReference type="PDBsum" id="2Q45"/>
<dbReference type="SMR" id="P0DKI3"/>
<dbReference type="FunCoup" id="P0DKI3">
    <property type="interactions" value="87"/>
</dbReference>
<dbReference type="STRING" id="3702.P0DKI3"/>
<dbReference type="PaxDb" id="3702-AT1G07440.1"/>
<dbReference type="ProteomicsDB" id="242801">
    <molecule id="P0DKI3-1"/>
</dbReference>
<dbReference type="DNASU" id="837256"/>
<dbReference type="EnsemblPlants" id="AT1G07440.1">
    <molecule id="P0DKI3-1"/>
    <property type="protein sequence ID" value="AT1G07440.1"/>
    <property type="gene ID" value="AT1G07440"/>
</dbReference>
<dbReference type="GeneID" id="837256"/>
<dbReference type="Gramene" id="AT1G07440.1">
    <molecule id="P0DKI3-1"/>
    <property type="protein sequence ID" value="AT1G07440.1"/>
    <property type="gene ID" value="AT1G07440"/>
</dbReference>
<dbReference type="KEGG" id="ath:AT1G07440"/>
<dbReference type="Araport" id="AT1G07440"/>
<dbReference type="TAIR" id="AT1G07440"/>
<dbReference type="eggNOG" id="KOG0725">
    <property type="taxonomic scope" value="Eukaryota"/>
</dbReference>
<dbReference type="HOGENOM" id="CLU_010194_1_1_1"/>
<dbReference type="InParanoid" id="P0DKI3"/>
<dbReference type="OMA" id="VSPAWTW"/>
<dbReference type="OrthoDB" id="417891at2759"/>
<dbReference type="PhylomeDB" id="P0DKI3"/>
<dbReference type="EvolutionaryTrace" id="P0DKI3"/>
<dbReference type="PRO" id="PR:P0DKI3"/>
<dbReference type="Proteomes" id="UP000006548">
    <property type="component" value="Chromosome 1"/>
</dbReference>
<dbReference type="ExpressionAtlas" id="P0DKI3">
    <property type="expression patterns" value="baseline and differential"/>
</dbReference>
<dbReference type="GO" id="GO:0016491">
    <property type="term" value="F:oxidoreductase activity"/>
    <property type="evidence" value="ECO:0007669"/>
    <property type="project" value="UniProtKB-KW"/>
</dbReference>
<dbReference type="CDD" id="cd05329">
    <property type="entry name" value="TR_SDR_c"/>
    <property type="match status" value="1"/>
</dbReference>
<dbReference type="FunFam" id="3.40.50.720:FF:000084">
    <property type="entry name" value="Short-chain dehydrogenase reductase"/>
    <property type="match status" value="1"/>
</dbReference>
<dbReference type="Gene3D" id="3.40.50.720">
    <property type="entry name" value="NAD(P)-binding Rossmann-like Domain"/>
    <property type="match status" value="1"/>
</dbReference>
<dbReference type="InterPro" id="IPR036291">
    <property type="entry name" value="NAD(P)-bd_dom_sf"/>
</dbReference>
<dbReference type="InterPro" id="IPR020904">
    <property type="entry name" value="Sc_DH/Rdtase_CS"/>
</dbReference>
<dbReference type="InterPro" id="IPR002347">
    <property type="entry name" value="SDR_fam"/>
</dbReference>
<dbReference type="InterPro" id="IPR045000">
    <property type="entry name" value="TR"/>
</dbReference>
<dbReference type="PANTHER" id="PTHR42898:SF18">
    <property type="entry name" value="3-OXOACYL-[ACYL-CARRIER-PROTEIN] REDUCTASE"/>
    <property type="match status" value="1"/>
</dbReference>
<dbReference type="PANTHER" id="PTHR42898">
    <property type="entry name" value="TROPINONE REDUCTASE"/>
    <property type="match status" value="1"/>
</dbReference>
<dbReference type="Pfam" id="PF13561">
    <property type="entry name" value="adh_short_C2"/>
    <property type="match status" value="1"/>
</dbReference>
<dbReference type="PRINTS" id="PR00081">
    <property type="entry name" value="GDHRDH"/>
</dbReference>
<dbReference type="PRINTS" id="PR00080">
    <property type="entry name" value="SDRFAMILY"/>
</dbReference>
<dbReference type="SUPFAM" id="SSF51735">
    <property type="entry name" value="NAD(P)-binding Rossmann-fold domains"/>
    <property type="match status" value="1"/>
</dbReference>
<dbReference type="PROSITE" id="PS00061">
    <property type="entry name" value="ADH_SHORT"/>
    <property type="match status" value="1"/>
</dbReference>
<feature type="chain" id="PRO_0000054789" description="Tropinone reductase homolog At1g07440">
    <location>
        <begin position="1"/>
        <end position="266"/>
    </location>
</feature>
<feature type="active site" description="Proton acceptor" evidence="2">
    <location>
        <position position="164"/>
    </location>
</feature>
<feature type="binding site" evidence="1">
    <location>
        <begin position="18"/>
        <end position="42"/>
    </location>
    <ligand>
        <name>NADP(+)</name>
        <dbReference type="ChEBI" id="CHEBI:58349"/>
    </ligand>
</feature>
<feature type="binding site" evidence="1">
    <location>
        <position position="151"/>
    </location>
    <ligand>
        <name>substrate</name>
    </ligand>
</feature>
<feature type="helix" evidence="7">
    <location>
        <begin position="8"/>
        <end position="10"/>
    </location>
</feature>
<feature type="strand" evidence="6">
    <location>
        <begin position="16"/>
        <end position="19"/>
    </location>
</feature>
<feature type="turn" evidence="6">
    <location>
        <begin position="20"/>
        <end position="23"/>
    </location>
</feature>
<feature type="helix" evidence="6">
    <location>
        <begin position="25"/>
        <end position="36"/>
    </location>
</feature>
<feature type="strand" evidence="6">
    <location>
        <begin position="40"/>
        <end position="46"/>
    </location>
</feature>
<feature type="helix" evidence="6">
    <location>
        <begin position="48"/>
        <end position="60"/>
    </location>
</feature>
<feature type="strand" evidence="6">
    <location>
        <begin position="65"/>
        <end position="69"/>
    </location>
</feature>
<feature type="helix" evidence="6">
    <location>
        <begin position="75"/>
        <end position="89"/>
    </location>
</feature>
<feature type="strand" evidence="6">
    <location>
        <begin position="94"/>
        <end position="99"/>
    </location>
</feature>
<feature type="helix" evidence="6">
    <location>
        <begin position="113"/>
        <end position="141"/>
    </location>
</feature>
<feature type="strand" evidence="6">
    <location>
        <begin position="145"/>
        <end position="149"/>
    </location>
</feature>
<feature type="helix" evidence="6">
    <location>
        <begin position="163"/>
        <end position="182"/>
    </location>
</feature>
<feature type="helix" evidence="6">
    <location>
        <begin position="183"/>
        <end position="185"/>
    </location>
</feature>
<feature type="strand" evidence="6">
    <location>
        <begin position="188"/>
        <end position="193"/>
    </location>
</feature>
<feature type="helix" evidence="6">
    <location>
        <begin position="226"/>
        <end position="229"/>
    </location>
</feature>
<feature type="helix" evidence="6">
    <location>
        <begin position="230"/>
        <end position="236"/>
    </location>
</feature>
<feature type="helix" evidence="6">
    <location>
        <begin position="239"/>
        <end position="241"/>
    </location>
</feature>
<feature type="strand" evidence="6">
    <location>
        <begin position="248"/>
        <end position="250"/>
    </location>
</feature>
<feature type="strand" evidence="6">
    <location>
        <begin position="255"/>
        <end position="257"/>
    </location>
</feature>
<feature type="strand" evidence="6">
    <location>
        <begin position="260"/>
        <end position="262"/>
    </location>
</feature>
<protein>
    <recommendedName>
        <fullName evidence="3">Tropinone reductase homolog At1g07440</fullName>
        <ecNumber evidence="3">1.1.1.-</ecNumber>
    </recommendedName>
</protein>
<sequence length="266" mass="28332">MAGAEQSQRWSLKAKTVLVTGGTKGIGHAIVEEFAGFGAVIHTCARNEYELNECLSKWQKKGFQVTGSVCDASLRPEREKLMQTVSSMFGGKLDILINNLGAIRSKPTLDYTAEDFSFHISTNLESAYHLSQLAHPLLKASGCGNIIFMSSIAGVVSASVGSIYSATKGALNQLARNLACEWASDGIRANAVAPAVIATPLAEAVYDDEFKKVVISRKPLGRFGEPEEVSSLVAFLCMPAASYITGQTICVDGGLTVNGFSYQPQG</sequence>